<dbReference type="EC" id="7.1.1.-" evidence="1"/>
<dbReference type="EMBL" id="CP000239">
    <property type="protein sequence ID" value="ABC99768.1"/>
    <property type="molecule type" value="Genomic_DNA"/>
</dbReference>
<dbReference type="RefSeq" id="WP_011430446.1">
    <property type="nucleotide sequence ID" value="NC_007775.1"/>
</dbReference>
<dbReference type="SMR" id="Q2JU56"/>
<dbReference type="STRING" id="321327.CYA_1607"/>
<dbReference type="KEGG" id="cya:CYA_1607"/>
<dbReference type="eggNOG" id="ENOG5032XZT">
    <property type="taxonomic scope" value="Bacteria"/>
</dbReference>
<dbReference type="HOGENOM" id="CLU_195299_0_0_3"/>
<dbReference type="OrthoDB" id="426633at2"/>
<dbReference type="Proteomes" id="UP000008818">
    <property type="component" value="Chromosome"/>
</dbReference>
<dbReference type="GO" id="GO:0031676">
    <property type="term" value="C:plasma membrane-derived thylakoid membrane"/>
    <property type="evidence" value="ECO:0007669"/>
    <property type="project" value="UniProtKB-SubCell"/>
</dbReference>
<dbReference type="GO" id="GO:0016655">
    <property type="term" value="F:oxidoreductase activity, acting on NAD(P)H, quinone or similar compound as acceptor"/>
    <property type="evidence" value="ECO:0007669"/>
    <property type="project" value="UniProtKB-UniRule"/>
</dbReference>
<dbReference type="GO" id="GO:0048038">
    <property type="term" value="F:quinone binding"/>
    <property type="evidence" value="ECO:0007669"/>
    <property type="project" value="UniProtKB-KW"/>
</dbReference>
<dbReference type="HAMAP" id="MF_01354">
    <property type="entry name" value="NDH1_NDH1O"/>
    <property type="match status" value="1"/>
</dbReference>
<dbReference type="InterPro" id="IPR020905">
    <property type="entry name" value="NdhO"/>
</dbReference>
<dbReference type="Pfam" id="PF11910">
    <property type="entry name" value="NdhO"/>
    <property type="match status" value="1"/>
</dbReference>
<organism>
    <name type="scientific">Synechococcus sp. (strain JA-3-3Ab)</name>
    <name type="common">Cyanobacteria bacterium Yellowstone A-Prime</name>
    <dbReference type="NCBI Taxonomy" id="321327"/>
    <lineage>
        <taxon>Bacteria</taxon>
        <taxon>Bacillati</taxon>
        <taxon>Cyanobacteriota</taxon>
        <taxon>Cyanophyceae</taxon>
        <taxon>Synechococcales</taxon>
        <taxon>Synechococcaceae</taxon>
        <taxon>Synechococcus</taxon>
    </lineage>
</organism>
<comment type="function">
    <text evidence="1">NDH-1 shuttles electrons from an unknown electron donor, via FMN and iron-sulfur (Fe-S) centers, to quinones in the respiratory and/or the photosynthetic chain. The immediate electron acceptor for the enzyme in this species is believed to be plastoquinone. Couples the redox reaction to proton translocation, and thus conserves the redox energy in a proton gradient. Cyanobacterial NDH-1 also plays a role in inorganic carbon-concentration.</text>
</comment>
<comment type="catalytic activity">
    <reaction evidence="1">
        <text>a plastoquinone + NADH + (n+1) H(+)(in) = a plastoquinol + NAD(+) + n H(+)(out)</text>
        <dbReference type="Rhea" id="RHEA:42608"/>
        <dbReference type="Rhea" id="RHEA-COMP:9561"/>
        <dbReference type="Rhea" id="RHEA-COMP:9562"/>
        <dbReference type="ChEBI" id="CHEBI:15378"/>
        <dbReference type="ChEBI" id="CHEBI:17757"/>
        <dbReference type="ChEBI" id="CHEBI:57540"/>
        <dbReference type="ChEBI" id="CHEBI:57945"/>
        <dbReference type="ChEBI" id="CHEBI:62192"/>
    </reaction>
</comment>
<comment type="catalytic activity">
    <reaction evidence="1">
        <text>a plastoquinone + NADPH + (n+1) H(+)(in) = a plastoquinol + NADP(+) + n H(+)(out)</text>
        <dbReference type="Rhea" id="RHEA:42612"/>
        <dbReference type="Rhea" id="RHEA-COMP:9561"/>
        <dbReference type="Rhea" id="RHEA-COMP:9562"/>
        <dbReference type="ChEBI" id="CHEBI:15378"/>
        <dbReference type="ChEBI" id="CHEBI:17757"/>
        <dbReference type="ChEBI" id="CHEBI:57783"/>
        <dbReference type="ChEBI" id="CHEBI:58349"/>
        <dbReference type="ChEBI" id="CHEBI:62192"/>
    </reaction>
</comment>
<comment type="subunit">
    <text evidence="1">NDH-1 can be composed of about 15 different subunits; different subcomplexes with different compositions have been identified which probably have different functions.</text>
</comment>
<comment type="subcellular location">
    <subcellularLocation>
        <location evidence="1">Cellular thylakoid membrane</location>
        <topology evidence="1">Peripheral membrane protein</topology>
        <orientation evidence="1">Cytoplasmic side</orientation>
    </subcellularLocation>
</comment>
<comment type="similarity">
    <text evidence="1">Belongs to the complex I NdhO subunit family.</text>
</comment>
<proteinExistence type="inferred from homology"/>
<protein>
    <recommendedName>
        <fullName evidence="1">NAD(P)H-quinone oxidoreductase subunit O</fullName>
        <ecNumber evidence="1">7.1.1.-</ecNumber>
    </recommendedName>
    <alternativeName>
        <fullName evidence="1">NAD(P)H dehydrogenase I subunit O</fullName>
    </alternativeName>
    <alternativeName>
        <fullName>NDH-1 subunit O</fullName>
    </alternativeName>
    <alternativeName>
        <fullName>NDH-O</fullName>
    </alternativeName>
</protein>
<gene>
    <name evidence="1" type="primary">ndhO</name>
    <name type="ordered locus">CYA_1607</name>
</gene>
<keyword id="KW-0472">Membrane</keyword>
<keyword id="KW-0520">NAD</keyword>
<keyword id="KW-0521">NADP</keyword>
<keyword id="KW-0618">Plastoquinone</keyword>
<keyword id="KW-0874">Quinone</keyword>
<keyword id="KW-0793">Thylakoid</keyword>
<keyword id="KW-1278">Translocase</keyword>
<keyword id="KW-0813">Transport</keyword>
<reference key="1">
    <citation type="journal article" date="2007" name="ISME J.">
        <title>Population level functional diversity in a microbial community revealed by comparative genomic and metagenomic analyses.</title>
        <authorList>
            <person name="Bhaya D."/>
            <person name="Grossman A.R."/>
            <person name="Steunou A.-S."/>
            <person name="Khuri N."/>
            <person name="Cohan F.M."/>
            <person name="Hamamura N."/>
            <person name="Melendrez M.C."/>
            <person name="Bateson M.M."/>
            <person name="Ward D.M."/>
            <person name="Heidelberg J.F."/>
        </authorList>
    </citation>
    <scope>NUCLEOTIDE SEQUENCE [LARGE SCALE GENOMIC DNA]</scope>
    <source>
        <strain>JA-3-3Ab</strain>
    </source>
</reference>
<feature type="chain" id="PRO_0000353658" description="NAD(P)H-quinone oxidoreductase subunit O">
    <location>
        <begin position="1"/>
        <end position="72"/>
    </location>
</feature>
<sequence length="72" mass="8009">MAIKRGTLVRAIREKLQGSLEAQASDPLIPNYVFETPGEVVDIKDDYLQIKFGAVPTPPIWLRADQVEEIAS</sequence>
<evidence type="ECO:0000255" key="1">
    <source>
        <dbReference type="HAMAP-Rule" id="MF_01354"/>
    </source>
</evidence>
<accession>Q2JU56</accession>
<name>NDHO_SYNJA</name>